<feature type="chain" id="PRO_1000006310" description="Serine hydroxymethyltransferase">
    <location>
        <begin position="1"/>
        <end position="417"/>
    </location>
</feature>
<feature type="binding site" evidence="1">
    <location>
        <position position="121"/>
    </location>
    <ligand>
        <name>(6S)-5,6,7,8-tetrahydrofolate</name>
        <dbReference type="ChEBI" id="CHEBI:57453"/>
    </ligand>
</feature>
<feature type="binding site" evidence="1">
    <location>
        <begin position="125"/>
        <end position="127"/>
    </location>
    <ligand>
        <name>(6S)-5,6,7,8-tetrahydrofolate</name>
        <dbReference type="ChEBI" id="CHEBI:57453"/>
    </ligand>
</feature>
<feature type="binding site" evidence="1">
    <location>
        <begin position="355"/>
        <end position="357"/>
    </location>
    <ligand>
        <name>(6S)-5,6,7,8-tetrahydrofolate</name>
        <dbReference type="ChEBI" id="CHEBI:57453"/>
    </ligand>
</feature>
<feature type="site" description="Plays an important role in substrate specificity" evidence="1">
    <location>
        <position position="229"/>
    </location>
</feature>
<feature type="modified residue" description="N6-(pyridoxal phosphate)lysine" evidence="1">
    <location>
        <position position="230"/>
    </location>
</feature>
<reference key="1">
    <citation type="journal article" date="2007" name="Science">
        <title>The Calyptogena magnifica chemoautotrophic symbiont genome.</title>
        <authorList>
            <person name="Newton I.L.G."/>
            <person name="Woyke T."/>
            <person name="Auchtung T.A."/>
            <person name="Dilly G.F."/>
            <person name="Dutton R.J."/>
            <person name="Fisher M.C."/>
            <person name="Fontanez K.M."/>
            <person name="Lau E."/>
            <person name="Stewart F.J."/>
            <person name="Richardson P.M."/>
            <person name="Barry K.W."/>
            <person name="Saunders E."/>
            <person name="Detter J.C."/>
            <person name="Wu D."/>
            <person name="Eisen J.A."/>
            <person name="Cavanaugh C.M."/>
        </authorList>
    </citation>
    <scope>NUCLEOTIDE SEQUENCE [LARGE SCALE GENOMIC DNA]</scope>
</reference>
<accession>A1AWS2</accession>
<comment type="function">
    <text evidence="1">Catalyzes the reversible interconversion of serine and glycine with tetrahydrofolate (THF) serving as the one-carbon carrier. This reaction serves as the major source of one-carbon groups required for the biosynthesis of purines, thymidylate, methionine, and other important biomolecules. Also exhibits THF-independent aldolase activity toward beta-hydroxyamino acids, producing glycine and aldehydes, via a retro-aldol mechanism.</text>
</comment>
<comment type="catalytic activity">
    <reaction evidence="1">
        <text>(6R)-5,10-methylene-5,6,7,8-tetrahydrofolate + glycine + H2O = (6S)-5,6,7,8-tetrahydrofolate + L-serine</text>
        <dbReference type="Rhea" id="RHEA:15481"/>
        <dbReference type="ChEBI" id="CHEBI:15377"/>
        <dbReference type="ChEBI" id="CHEBI:15636"/>
        <dbReference type="ChEBI" id="CHEBI:33384"/>
        <dbReference type="ChEBI" id="CHEBI:57305"/>
        <dbReference type="ChEBI" id="CHEBI:57453"/>
        <dbReference type="EC" id="2.1.2.1"/>
    </reaction>
</comment>
<comment type="cofactor">
    <cofactor evidence="1">
        <name>pyridoxal 5'-phosphate</name>
        <dbReference type="ChEBI" id="CHEBI:597326"/>
    </cofactor>
</comment>
<comment type="pathway">
    <text evidence="1">One-carbon metabolism; tetrahydrofolate interconversion.</text>
</comment>
<comment type="pathway">
    <text evidence="1">Amino-acid biosynthesis; glycine biosynthesis; glycine from L-serine: step 1/1.</text>
</comment>
<comment type="subunit">
    <text evidence="1">Homodimer.</text>
</comment>
<comment type="subcellular location">
    <subcellularLocation>
        <location evidence="1">Cytoplasm</location>
    </subcellularLocation>
</comment>
<comment type="similarity">
    <text evidence="1">Belongs to the SHMT family.</text>
</comment>
<organism>
    <name type="scientific">Ruthia magnifica subsp. Calyptogena magnifica</name>
    <dbReference type="NCBI Taxonomy" id="413404"/>
    <lineage>
        <taxon>Bacteria</taxon>
        <taxon>Pseudomonadati</taxon>
        <taxon>Pseudomonadota</taxon>
        <taxon>Gammaproteobacteria</taxon>
        <taxon>Candidatus Pseudothioglobaceae</taxon>
        <taxon>Candidatus Ruthturnera</taxon>
    </lineage>
</organism>
<keyword id="KW-0028">Amino-acid biosynthesis</keyword>
<keyword id="KW-0963">Cytoplasm</keyword>
<keyword id="KW-0554">One-carbon metabolism</keyword>
<keyword id="KW-0663">Pyridoxal phosphate</keyword>
<keyword id="KW-0808">Transferase</keyword>
<protein>
    <recommendedName>
        <fullName evidence="1">Serine hydroxymethyltransferase</fullName>
        <shortName evidence="1">SHMT</shortName>
        <shortName evidence="1">Serine methylase</shortName>
        <ecNumber evidence="1">2.1.2.1</ecNumber>
    </recommendedName>
</protein>
<sequence length="417" mass="45447">MFNKSQTLAKVDIEIHQAITQEKVRQEAHIELIASENYTSPAVMEAQGSQLTNKYAEGYPRKRYYGGCEYVDTVEQLAIDRAKVLFGADYANVQPHSGSQANAAVFQALLVPGDTILGMSLVHGGHLTHGAAPSFSGKNFNAIQYGLNEKTGEINYEQVEALVKKHKPKMIIAGFSAYSRVVDWQYFREIADTAGAYLMVDMAHVAGLVVTGEYPSPVAIADVTTTTTHKTLRGPRGGLILAKANEAIEKKLNSAIFPGIQGGPLMHVIAAKAVSFKEAMSDEYKVYQKQVKINAQVMANIFIERGFDVVSGGTDDHLFLVSFIDQRLTGKAVDAALDSAYITVNMNVVPNDPQSPFVTSGIRVGTPAVTTRGFNEADCADLAMWMCDICADLENEAMIDQVREKVTSLCVKHPVYN</sequence>
<proteinExistence type="inferred from homology"/>
<name>GLYA_RUTMC</name>
<evidence type="ECO:0000255" key="1">
    <source>
        <dbReference type="HAMAP-Rule" id="MF_00051"/>
    </source>
</evidence>
<dbReference type="EC" id="2.1.2.1" evidence="1"/>
<dbReference type="EMBL" id="CP000488">
    <property type="protein sequence ID" value="ABL02379.1"/>
    <property type="molecule type" value="Genomic_DNA"/>
</dbReference>
<dbReference type="RefSeq" id="WP_011738004.1">
    <property type="nucleotide sequence ID" value="NC_008610.1"/>
</dbReference>
<dbReference type="SMR" id="A1AWS2"/>
<dbReference type="STRING" id="413404.Rmag_0632"/>
<dbReference type="KEGG" id="rma:Rmag_0632"/>
<dbReference type="eggNOG" id="COG0112">
    <property type="taxonomic scope" value="Bacteria"/>
</dbReference>
<dbReference type="HOGENOM" id="CLU_022477_2_1_6"/>
<dbReference type="OrthoDB" id="9803846at2"/>
<dbReference type="UniPathway" id="UPA00193"/>
<dbReference type="UniPathway" id="UPA00288">
    <property type="reaction ID" value="UER01023"/>
</dbReference>
<dbReference type="Proteomes" id="UP000002587">
    <property type="component" value="Chromosome"/>
</dbReference>
<dbReference type="GO" id="GO:0005829">
    <property type="term" value="C:cytosol"/>
    <property type="evidence" value="ECO:0007669"/>
    <property type="project" value="TreeGrafter"/>
</dbReference>
<dbReference type="GO" id="GO:0004372">
    <property type="term" value="F:glycine hydroxymethyltransferase activity"/>
    <property type="evidence" value="ECO:0007669"/>
    <property type="project" value="UniProtKB-UniRule"/>
</dbReference>
<dbReference type="GO" id="GO:0030170">
    <property type="term" value="F:pyridoxal phosphate binding"/>
    <property type="evidence" value="ECO:0007669"/>
    <property type="project" value="UniProtKB-UniRule"/>
</dbReference>
<dbReference type="GO" id="GO:0019264">
    <property type="term" value="P:glycine biosynthetic process from serine"/>
    <property type="evidence" value="ECO:0007669"/>
    <property type="project" value="UniProtKB-UniRule"/>
</dbReference>
<dbReference type="GO" id="GO:0035999">
    <property type="term" value="P:tetrahydrofolate interconversion"/>
    <property type="evidence" value="ECO:0007669"/>
    <property type="project" value="UniProtKB-UniRule"/>
</dbReference>
<dbReference type="CDD" id="cd00378">
    <property type="entry name" value="SHMT"/>
    <property type="match status" value="1"/>
</dbReference>
<dbReference type="FunFam" id="3.40.640.10:FF:000001">
    <property type="entry name" value="Serine hydroxymethyltransferase"/>
    <property type="match status" value="1"/>
</dbReference>
<dbReference type="FunFam" id="3.90.1150.10:FF:000003">
    <property type="entry name" value="Serine hydroxymethyltransferase"/>
    <property type="match status" value="1"/>
</dbReference>
<dbReference type="Gene3D" id="3.90.1150.10">
    <property type="entry name" value="Aspartate Aminotransferase, domain 1"/>
    <property type="match status" value="1"/>
</dbReference>
<dbReference type="Gene3D" id="3.40.640.10">
    <property type="entry name" value="Type I PLP-dependent aspartate aminotransferase-like (Major domain)"/>
    <property type="match status" value="1"/>
</dbReference>
<dbReference type="HAMAP" id="MF_00051">
    <property type="entry name" value="SHMT"/>
    <property type="match status" value="1"/>
</dbReference>
<dbReference type="InterPro" id="IPR015424">
    <property type="entry name" value="PyrdxlP-dep_Trfase"/>
</dbReference>
<dbReference type="InterPro" id="IPR015421">
    <property type="entry name" value="PyrdxlP-dep_Trfase_major"/>
</dbReference>
<dbReference type="InterPro" id="IPR015422">
    <property type="entry name" value="PyrdxlP-dep_Trfase_small"/>
</dbReference>
<dbReference type="InterPro" id="IPR001085">
    <property type="entry name" value="Ser_HO-MeTrfase"/>
</dbReference>
<dbReference type="InterPro" id="IPR049943">
    <property type="entry name" value="Ser_HO-MeTrfase-like"/>
</dbReference>
<dbReference type="InterPro" id="IPR019798">
    <property type="entry name" value="Ser_HO-MeTrfase_PLP_BS"/>
</dbReference>
<dbReference type="InterPro" id="IPR039429">
    <property type="entry name" value="SHMT-like_dom"/>
</dbReference>
<dbReference type="NCBIfam" id="NF000586">
    <property type="entry name" value="PRK00011.1"/>
    <property type="match status" value="1"/>
</dbReference>
<dbReference type="PANTHER" id="PTHR11680">
    <property type="entry name" value="SERINE HYDROXYMETHYLTRANSFERASE"/>
    <property type="match status" value="1"/>
</dbReference>
<dbReference type="PANTHER" id="PTHR11680:SF50">
    <property type="entry name" value="SERINE HYDROXYMETHYLTRANSFERASE"/>
    <property type="match status" value="1"/>
</dbReference>
<dbReference type="Pfam" id="PF00464">
    <property type="entry name" value="SHMT"/>
    <property type="match status" value="1"/>
</dbReference>
<dbReference type="PIRSF" id="PIRSF000412">
    <property type="entry name" value="SHMT"/>
    <property type="match status" value="1"/>
</dbReference>
<dbReference type="SUPFAM" id="SSF53383">
    <property type="entry name" value="PLP-dependent transferases"/>
    <property type="match status" value="1"/>
</dbReference>
<dbReference type="PROSITE" id="PS00096">
    <property type="entry name" value="SHMT"/>
    <property type="match status" value="1"/>
</dbReference>
<gene>
    <name evidence="1" type="primary">glyA</name>
    <name type="ordered locus">Rmag_0632</name>
</gene>